<dbReference type="EC" id="2.4.2.29" evidence="1"/>
<dbReference type="EMBL" id="CP000241">
    <property type="protein sequence ID" value="ABF84350.1"/>
    <property type="molecule type" value="Genomic_DNA"/>
</dbReference>
<dbReference type="RefSeq" id="WP_000347415.1">
    <property type="nucleotide sequence ID" value="NC_008086.1"/>
</dbReference>
<dbReference type="SMR" id="Q1CUM2"/>
<dbReference type="KEGG" id="hpa:HPAG1_0283"/>
<dbReference type="HOGENOM" id="CLU_022060_0_1_7"/>
<dbReference type="UniPathway" id="UPA00392"/>
<dbReference type="GO" id="GO:0005829">
    <property type="term" value="C:cytosol"/>
    <property type="evidence" value="ECO:0007669"/>
    <property type="project" value="TreeGrafter"/>
</dbReference>
<dbReference type="GO" id="GO:0046872">
    <property type="term" value="F:metal ion binding"/>
    <property type="evidence" value="ECO:0007669"/>
    <property type="project" value="UniProtKB-KW"/>
</dbReference>
<dbReference type="GO" id="GO:0008479">
    <property type="term" value="F:tRNA-guanosine(34) queuine transglycosylase activity"/>
    <property type="evidence" value="ECO:0007669"/>
    <property type="project" value="UniProtKB-UniRule"/>
</dbReference>
<dbReference type="GO" id="GO:0008616">
    <property type="term" value="P:queuosine biosynthetic process"/>
    <property type="evidence" value="ECO:0007669"/>
    <property type="project" value="UniProtKB-UniRule"/>
</dbReference>
<dbReference type="GO" id="GO:0101030">
    <property type="term" value="P:tRNA-guanine transglycosylation"/>
    <property type="evidence" value="ECO:0007669"/>
    <property type="project" value="InterPro"/>
</dbReference>
<dbReference type="Gene3D" id="3.20.20.105">
    <property type="entry name" value="Queuine tRNA-ribosyltransferase-like"/>
    <property type="match status" value="1"/>
</dbReference>
<dbReference type="HAMAP" id="MF_00168">
    <property type="entry name" value="Q_tRNA_Tgt"/>
    <property type="match status" value="1"/>
</dbReference>
<dbReference type="InterPro" id="IPR004803">
    <property type="entry name" value="TGT"/>
</dbReference>
<dbReference type="InterPro" id="IPR036511">
    <property type="entry name" value="TGT-like_sf"/>
</dbReference>
<dbReference type="InterPro" id="IPR002616">
    <property type="entry name" value="tRNA_ribo_trans-like"/>
</dbReference>
<dbReference type="NCBIfam" id="TIGR00430">
    <property type="entry name" value="Q_tRNA_tgt"/>
    <property type="match status" value="1"/>
</dbReference>
<dbReference type="NCBIfam" id="TIGR00449">
    <property type="entry name" value="tgt_general"/>
    <property type="match status" value="1"/>
</dbReference>
<dbReference type="PANTHER" id="PTHR43530">
    <property type="entry name" value="QUEUINE TRNA-RIBOSYLTRANSFERASE CATALYTIC SUBUNIT 1"/>
    <property type="match status" value="1"/>
</dbReference>
<dbReference type="PANTHER" id="PTHR43530:SF1">
    <property type="entry name" value="QUEUINE TRNA-RIBOSYLTRANSFERASE CATALYTIC SUBUNIT 1"/>
    <property type="match status" value="1"/>
</dbReference>
<dbReference type="Pfam" id="PF01702">
    <property type="entry name" value="TGT"/>
    <property type="match status" value="1"/>
</dbReference>
<dbReference type="SUPFAM" id="SSF51713">
    <property type="entry name" value="tRNA-guanine transglycosylase"/>
    <property type="match status" value="1"/>
</dbReference>
<sequence length="371" mass="41298">MDFQLQAVDDNARAGLLNLAHSQVATPVFMPVGTQGCIKSLDATDAQEILGAKLILANTYHMYLRPGEKVVGQLGGLHRFAQFQGSFLTDSGGFQAFSLSGNIKLQEDGIVFKSHIDGSKHLFTPAKVLDIQYSLNSDIMMVLDDLVGLPAPLKRLEESIKRSAKWANLSLEYHKQKNRPSNNLFAIIQGGTHLKMRSLSVGLTHEGFDGYAIGGLAVGESVDEMLETIAHTAPLLPKDKPRYLMGVGTPENILDAIGLGVDMFDCVMPTRNARNATLFTYSGKISIKNAPYKLDNTPIEENCACYTCKRYSKAYLHHLFRAKELTYARLASLHNLHFYLELVKNARNAILEKRFLSFKKEFLEKYNSRSH</sequence>
<evidence type="ECO:0000255" key="1">
    <source>
        <dbReference type="HAMAP-Rule" id="MF_00168"/>
    </source>
</evidence>
<accession>Q1CUM2</accession>
<keyword id="KW-0328">Glycosyltransferase</keyword>
<keyword id="KW-0479">Metal-binding</keyword>
<keyword id="KW-0671">Queuosine biosynthesis</keyword>
<keyword id="KW-0808">Transferase</keyword>
<keyword id="KW-0819">tRNA processing</keyword>
<keyword id="KW-0862">Zinc</keyword>
<proteinExistence type="inferred from homology"/>
<feature type="chain" id="PRO_1000016803" description="Queuine tRNA-ribosyltransferase">
    <location>
        <begin position="1"/>
        <end position="371"/>
    </location>
</feature>
<feature type="region of interest" description="RNA binding" evidence="1">
    <location>
        <begin position="246"/>
        <end position="252"/>
    </location>
</feature>
<feature type="region of interest" description="RNA binding; important for wobble base 34 recognition" evidence="1">
    <location>
        <begin position="270"/>
        <end position="274"/>
    </location>
</feature>
<feature type="active site" description="Proton acceptor" evidence="1">
    <location>
        <position position="90"/>
    </location>
</feature>
<feature type="active site" description="Nucleophile" evidence="1">
    <location>
        <position position="265"/>
    </location>
</feature>
<feature type="binding site" evidence="1">
    <location>
        <begin position="90"/>
        <end position="94"/>
    </location>
    <ligand>
        <name>substrate</name>
    </ligand>
</feature>
<feature type="binding site" evidence="1">
    <location>
        <position position="144"/>
    </location>
    <ligand>
        <name>substrate</name>
    </ligand>
</feature>
<feature type="binding site" evidence="1">
    <location>
        <position position="189"/>
    </location>
    <ligand>
        <name>substrate</name>
    </ligand>
</feature>
<feature type="binding site" evidence="1">
    <location>
        <position position="215"/>
    </location>
    <ligand>
        <name>substrate</name>
    </ligand>
</feature>
<feature type="binding site" evidence="1">
    <location>
        <position position="303"/>
    </location>
    <ligand>
        <name>Zn(2+)</name>
        <dbReference type="ChEBI" id="CHEBI:29105"/>
    </ligand>
</feature>
<feature type="binding site" evidence="1">
    <location>
        <position position="305"/>
    </location>
    <ligand>
        <name>Zn(2+)</name>
        <dbReference type="ChEBI" id="CHEBI:29105"/>
    </ligand>
</feature>
<feature type="binding site" evidence="1">
    <location>
        <position position="308"/>
    </location>
    <ligand>
        <name>Zn(2+)</name>
        <dbReference type="ChEBI" id="CHEBI:29105"/>
    </ligand>
</feature>
<feature type="binding site" evidence="1">
    <location>
        <position position="334"/>
    </location>
    <ligand>
        <name>Zn(2+)</name>
        <dbReference type="ChEBI" id="CHEBI:29105"/>
    </ligand>
</feature>
<gene>
    <name evidence="1" type="primary">tgt</name>
    <name type="ordered locus">HPAG1_0283</name>
</gene>
<comment type="function">
    <text evidence="1">Catalyzes the base-exchange of a guanine (G) residue with the queuine precursor 7-aminomethyl-7-deazaguanine (PreQ1) at position 34 (anticodon wobble position) in tRNAs with GU(N) anticodons (tRNA-Asp, -Asn, -His and -Tyr). Catalysis occurs through a double-displacement mechanism. The nucleophile active site attacks the C1' of nucleotide 34 to detach the guanine base from the RNA, forming a covalent enzyme-RNA intermediate. The proton acceptor active site deprotonates the incoming PreQ1, allowing a nucleophilic attack on the C1' of the ribose to form the product. After dissociation, two additional enzymatic reactions on the tRNA convert PreQ1 to queuine (Q), resulting in the hypermodified nucleoside queuosine (7-(((4,5-cis-dihydroxy-2-cyclopenten-1-yl)amino)methyl)-7-deazaguanosine).</text>
</comment>
<comment type="catalytic activity">
    <reaction evidence="1">
        <text>7-aminomethyl-7-carbaguanine + guanosine(34) in tRNA = 7-aminomethyl-7-carbaguanosine(34) in tRNA + guanine</text>
        <dbReference type="Rhea" id="RHEA:24104"/>
        <dbReference type="Rhea" id="RHEA-COMP:10341"/>
        <dbReference type="Rhea" id="RHEA-COMP:10342"/>
        <dbReference type="ChEBI" id="CHEBI:16235"/>
        <dbReference type="ChEBI" id="CHEBI:58703"/>
        <dbReference type="ChEBI" id="CHEBI:74269"/>
        <dbReference type="ChEBI" id="CHEBI:82833"/>
        <dbReference type="EC" id="2.4.2.29"/>
    </reaction>
</comment>
<comment type="cofactor">
    <cofactor evidence="1">
        <name>Zn(2+)</name>
        <dbReference type="ChEBI" id="CHEBI:29105"/>
    </cofactor>
    <text evidence="1">Binds 1 zinc ion per subunit.</text>
</comment>
<comment type="pathway">
    <text evidence="1">tRNA modification; tRNA-queuosine biosynthesis.</text>
</comment>
<comment type="subunit">
    <text evidence="1">Homodimer. Within each dimer, one monomer is responsible for RNA recognition and catalysis, while the other monomer binds to the replacement base PreQ1.</text>
</comment>
<comment type="similarity">
    <text evidence="1">Belongs to the queuine tRNA-ribosyltransferase family.</text>
</comment>
<organism>
    <name type="scientific">Helicobacter pylori (strain HPAG1)</name>
    <dbReference type="NCBI Taxonomy" id="357544"/>
    <lineage>
        <taxon>Bacteria</taxon>
        <taxon>Pseudomonadati</taxon>
        <taxon>Campylobacterota</taxon>
        <taxon>Epsilonproteobacteria</taxon>
        <taxon>Campylobacterales</taxon>
        <taxon>Helicobacteraceae</taxon>
        <taxon>Helicobacter</taxon>
    </lineage>
</organism>
<name>TGT_HELPH</name>
<reference key="1">
    <citation type="journal article" date="2006" name="Proc. Natl. Acad. Sci. U.S.A.">
        <title>The complete genome sequence of a chronic atrophic gastritis Helicobacter pylori strain: evolution during disease progression.</title>
        <authorList>
            <person name="Oh J.D."/>
            <person name="Kling-Baeckhed H."/>
            <person name="Giannakis M."/>
            <person name="Xu J."/>
            <person name="Fulton R.S."/>
            <person name="Fulton L.A."/>
            <person name="Cordum H.S."/>
            <person name="Wang C."/>
            <person name="Elliott G."/>
            <person name="Edwards J."/>
            <person name="Mardis E.R."/>
            <person name="Engstrand L.G."/>
            <person name="Gordon J.I."/>
        </authorList>
    </citation>
    <scope>NUCLEOTIDE SEQUENCE [LARGE SCALE GENOMIC DNA]</scope>
    <source>
        <strain>HPAG1</strain>
    </source>
</reference>
<protein>
    <recommendedName>
        <fullName evidence="1">Queuine tRNA-ribosyltransferase</fullName>
        <ecNumber evidence="1">2.4.2.29</ecNumber>
    </recommendedName>
    <alternativeName>
        <fullName evidence="1">Guanine insertion enzyme</fullName>
    </alternativeName>
    <alternativeName>
        <fullName evidence="1">tRNA-guanine transglycosylase</fullName>
    </alternativeName>
</protein>